<accession>G3KIM4</accession>
<feature type="chain" id="PRO_0000419609" description="Lactoyl-CoA dehydratase subunit alpha">
    <location>
        <begin position="1" status="less than"/>
        <end position="422"/>
    </location>
</feature>
<feature type="non-terminal residue">
    <location>
        <position position="1"/>
    </location>
</feature>
<gene>
    <name type="primary">lcdA</name>
</gene>
<protein>
    <recommendedName>
        <fullName>Lactoyl-CoA dehydratase subunit alpha</fullName>
        <ecNumber>4.2.1.54</ecNumber>
    </recommendedName>
    <alternativeName>
        <fullName>(R)-lactyl-CoA dehydratase component E II</fullName>
    </alternativeName>
    <alternativeName>
        <fullName>2-hydroxybutyroyl-CoA dehydratase</fullName>
    </alternativeName>
</protein>
<reference key="1">
    <citation type="submission" date="2011-07" db="EMBL/GenBank/DDBJ databases">
        <authorList>
            <person name="Poehlein A."/>
            <person name="Schlien K."/>
            <person name="Daniel R."/>
            <person name="Gottschalk G."/>
            <person name="Buckel W."/>
        </authorList>
    </citation>
    <scope>NUCLEOTIDE SEQUENCE [GENOMIC DNA]</scope>
    <source>
        <strain>ATCC 25522 / DSM 1682 / JCM 1430 / NCIMB 10656 / VPI 5303 / X2</strain>
    </source>
</reference>
<reference key="2">
    <citation type="journal article" date="1985" name="J. Biol. Chem.">
        <title>Lactate reduction in Clostridium propionicum. Purification and properties of lactyl-CoA dehydratase.</title>
        <authorList>
            <person name="Kuchta R.D."/>
            <person name="Abeles R.H."/>
        </authorList>
    </citation>
    <scope>FUNCTION</scope>
    <scope>COFACTOR</scope>
    <scope>ACTIVITY REGULATION</scope>
    <scope>SUBUNIT</scope>
</reference>
<reference key="3">
    <citation type="journal article" date="1992" name="Eur. J. Biochem.">
        <title>(R)-lactyl-CoA dehydratase from Clostridium propionicum. Stereochemistry of the dehydration of (R)-2-hydroxybutyryl-CoA to crotonyl-CoA.</title>
        <authorList>
            <person name="Hofmeister A.E."/>
            <person name="Buckel W."/>
        </authorList>
    </citation>
    <scope>FUNCTION</scope>
    <scope>COFACTOR</scope>
    <scope>ACTIVITY REGULATION</scope>
    <scope>SUBUNIT</scope>
</reference>
<reference key="4">
    <citation type="journal article" date="2013" name="Appl. Microbiol. Biotechnol.">
        <title>Engineering Escherichia coli with acrylate pathway genes for propionic acid synthesis and its impact on mixed-acid fermentation.</title>
        <authorList>
            <person name="Kandasamy V."/>
            <person name="Vaidyanathan H."/>
            <person name="Djurdjevic I."/>
            <person name="Jayamani E."/>
            <person name="Ramachandran K.B."/>
            <person name="Buckel W."/>
            <person name="Jayaraman G."/>
            <person name="Ramalingam S."/>
        </authorList>
    </citation>
    <scope>FUNCTION IN THE ACRYLATE PATHWAY</scope>
</reference>
<evidence type="ECO:0000269" key="1">
    <source>
    </source>
</evidence>
<evidence type="ECO:0000269" key="2">
    <source>
    </source>
</evidence>
<evidence type="ECO:0000269" key="3">
    <source>
    </source>
</evidence>
<evidence type="ECO:0000305" key="4"/>
<proteinExistence type="evidence at protein level"/>
<organism>
    <name type="scientific">Anaerotignum propionicum</name>
    <name type="common">Clostridium propionicum</name>
    <dbReference type="NCBI Taxonomy" id="28446"/>
    <lineage>
        <taxon>Bacteria</taxon>
        <taxon>Bacillati</taxon>
        <taxon>Bacillota</taxon>
        <taxon>Clostridia</taxon>
        <taxon>Lachnospirales</taxon>
        <taxon>Anaerotignaceae</taxon>
        <taxon>Anaerotignum</taxon>
    </lineage>
</organism>
<dbReference type="EC" id="4.2.1.54"/>
<dbReference type="EMBL" id="JN244652">
    <property type="protein sequence ID" value="AEM62994.1"/>
    <property type="molecule type" value="Genomic_DNA"/>
</dbReference>
<dbReference type="RefSeq" id="WP_066048111.1">
    <property type="nucleotide sequence ID" value="NZ_JAYFOE010000006.1"/>
</dbReference>
<dbReference type="SMR" id="G3KIM4"/>
<dbReference type="KEGG" id="ag:AEM62994"/>
<dbReference type="BioCyc" id="MetaCyc:ALPHALAC-MONOMER"/>
<dbReference type="BRENDA" id="4.2.1.54">
    <property type="organism ID" value="1504"/>
</dbReference>
<dbReference type="GO" id="GO:0051539">
    <property type="term" value="F:4 iron, 4 sulfur cluster binding"/>
    <property type="evidence" value="ECO:0007669"/>
    <property type="project" value="UniProtKB-KW"/>
</dbReference>
<dbReference type="GO" id="GO:0018819">
    <property type="term" value="F:lactoyl-CoA dehydratase activity"/>
    <property type="evidence" value="ECO:0007669"/>
    <property type="project" value="UniProtKB-EC"/>
</dbReference>
<dbReference type="GO" id="GO:0046872">
    <property type="term" value="F:metal ion binding"/>
    <property type="evidence" value="ECO:0007669"/>
    <property type="project" value="UniProtKB-KW"/>
</dbReference>
<dbReference type="Gene3D" id="3.40.50.11890">
    <property type="match status" value="1"/>
</dbReference>
<dbReference type="Gene3D" id="3.40.50.11900">
    <property type="match status" value="1"/>
</dbReference>
<dbReference type="InterPro" id="IPR010327">
    <property type="entry name" value="FldB/FldC_alpha/beta"/>
</dbReference>
<dbReference type="PANTHER" id="PTHR30548">
    <property type="entry name" value="2-HYDROXYGLUTARYL-COA DEHYDRATASE, D-COMPONENT-RELATED"/>
    <property type="match status" value="1"/>
</dbReference>
<dbReference type="PANTHER" id="PTHR30548:SF4">
    <property type="entry name" value="SUBUNIT OF OXYGEN-SENSITIVE 2-HYDROXYISOCAPROYL-COA DEHYDRATASE"/>
    <property type="match status" value="1"/>
</dbReference>
<dbReference type="Pfam" id="PF06050">
    <property type="entry name" value="HGD-D"/>
    <property type="match status" value="1"/>
</dbReference>
<sequence>MSLTQGMKAKQLLAYFQGKADQDAREAKARGELVCWSASVAPPEFCVTMGIAMIYPETHAAGIGARKGAMDMLEVADRKGYNVDCCSYGRVNMGYMECLKEAAITGVKPEVLVNSPAADVPLPDLVITCNNICNTLLKWYENLAAELDIPCIVIDVPFNHTMPIPEYAKAYIADQFRNAISQLEVICGRPFDWKKFKEVKDQTQRSVYHWNRIAEMAKYKPSPLNGFDLFNYMALIVACRSLDYAEITFKAFADELEENLKAGIYAFKGAEKTRFQWEGIAVWPHLGHTFKSMKNLNSIMTGTAYPALWDLHYDANDESMHSMAEAYTRIYINTCLQNKVEVLLGIMEKGQVDGTVYHLNRSCKLMSFLNVETAEIIKEKNGLPYVSIDGDQTDPRVFSPAQFDTRVQALVEMMEANMAAAE</sequence>
<name>LCDA_ANAPI</name>
<comment type="function">
    <text evidence="1 2 3">Involved in the acrylate pathway for the conversion of D-lactic acid to propionic acid. Catalyzes the reversible dehydration of Lactoyl-CoA and 2-hydroxybutyroyl-CoA to acryloyl-CoA and crotonyl-CoA, respectively.</text>
</comment>
<comment type="catalytic activity">
    <reaction>
        <text>(R)-lactoyl-CoA = acryloyl-CoA + H2O</text>
        <dbReference type="Rhea" id="RHEA:34691"/>
        <dbReference type="ChEBI" id="CHEBI:15377"/>
        <dbReference type="ChEBI" id="CHEBI:57367"/>
        <dbReference type="ChEBI" id="CHEBI:70980"/>
        <dbReference type="EC" id="4.2.1.54"/>
    </reaction>
</comment>
<comment type="catalytic activity">
    <reaction>
        <text>(2R)-hydroxybutanoyl-CoA = (2E)-butenoyl-CoA + H2O</text>
        <dbReference type="Rhea" id="RHEA:47176"/>
        <dbReference type="ChEBI" id="CHEBI:15377"/>
        <dbReference type="ChEBI" id="CHEBI:57332"/>
        <dbReference type="ChEBI" id="CHEBI:87474"/>
    </reaction>
</comment>
<comment type="cofactor">
    <cofactor>
        <name>[4Fe-4S] cluster</name>
        <dbReference type="ChEBI" id="CHEBI:49883"/>
    </cofactor>
    <text>Binds 1 [4Fe-4S] cluster.</text>
</comment>
<comment type="cofactor">
    <cofactor>
        <name>FMN</name>
        <dbReference type="ChEBI" id="CHEBI:58210"/>
    </cofactor>
</comment>
<comment type="cofactor">
    <cofactor>
        <name>riboflavin</name>
        <dbReference type="ChEBI" id="CHEBI:57986"/>
    </cofactor>
</comment>
<comment type="cofactor">
    <cofactor>
        <name>Mg(2+)</name>
        <dbReference type="ChEBI" id="CHEBI:18420"/>
    </cofactor>
</comment>
<comment type="activity regulation">
    <text evidence="1 3">Activated by the LcdC protein.</text>
</comment>
<comment type="subunit">
    <text evidence="1 3">Heterodimer of an alpha (LcdA) and a beta (LcdB) subunit.</text>
</comment>
<comment type="miscellaneous">
    <text>The elimination of water from 2-hydroxybutyryl-CoA or lactoyl-CoA occurs in a syn mode.</text>
</comment>
<comment type="similarity">
    <text evidence="4">Belongs to the FldB/FldC dehydratase alpha/beta subunit family.</text>
</comment>
<keyword id="KW-0004">4Fe-4S</keyword>
<keyword id="KW-0285">Flavoprotein</keyword>
<keyword id="KW-0288">FMN</keyword>
<keyword id="KW-0408">Iron</keyword>
<keyword id="KW-0411">Iron-sulfur</keyword>
<keyword id="KW-0456">Lyase</keyword>
<keyword id="KW-0479">Metal-binding</keyword>